<evidence type="ECO:0000255" key="1">
    <source>
        <dbReference type="PROSITE-ProRule" id="PRU00037"/>
    </source>
</evidence>
<evidence type="ECO:0000305" key="2"/>
<dbReference type="EMBL" id="AY653733">
    <property type="protein sequence ID" value="AAV50998.1"/>
    <property type="molecule type" value="Genomic_DNA"/>
</dbReference>
<dbReference type="SMR" id="Q5UNY6"/>
<dbReference type="KEGG" id="vg:9925394"/>
<dbReference type="Proteomes" id="UP000001134">
    <property type="component" value="Genome"/>
</dbReference>
<dbReference type="Gene3D" id="3.30.710.10">
    <property type="entry name" value="Potassium Channel Kv1.1, Chain A"/>
    <property type="match status" value="1"/>
</dbReference>
<dbReference type="Gene3D" id="2.130.10.10">
    <property type="entry name" value="YVTN repeat-like/Quinoprotein amine dehydrogenase"/>
    <property type="match status" value="1"/>
</dbReference>
<dbReference type="InterPro" id="IPR000210">
    <property type="entry name" value="BTB/POZ_dom"/>
</dbReference>
<dbReference type="InterPro" id="IPR011047">
    <property type="entry name" value="Quinoprotein_ADH-like_sf"/>
</dbReference>
<dbReference type="InterPro" id="IPR011333">
    <property type="entry name" value="SKP1/BTB/POZ_sf"/>
</dbReference>
<dbReference type="InterPro" id="IPR015943">
    <property type="entry name" value="WD40/YVTN_repeat-like_dom_sf"/>
</dbReference>
<dbReference type="Pfam" id="PF00651">
    <property type="entry name" value="BTB"/>
    <property type="match status" value="1"/>
</dbReference>
<dbReference type="SUPFAM" id="SSF54695">
    <property type="entry name" value="POZ domain"/>
    <property type="match status" value="1"/>
</dbReference>
<dbReference type="SUPFAM" id="SSF50998">
    <property type="entry name" value="Quinoprotein alcohol dehydrogenase-like"/>
    <property type="match status" value="1"/>
</dbReference>
<dbReference type="PROSITE" id="PS50097">
    <property type="entry name" value="BTB"/>
    <property type="match status" value="1"/>
</dbReference>
<comment type="similarity">
    <text evidence="2">Belongs to the mimivirus BTB/WD family.</text>
</comment>
<name>YR738_MIMIV</name>
<organismHost>
    <name type="scientific">Acanthamoeba polyphaga</name>
    <name type="common">Amoeba</name>
    <dbReference type="NCBI Taxonomy" id="5757"/>
</organismHost>
<sequence>MSLQKHGLLFNNNKFSDCKLVLDDGNVQVTLNVHKCLLYMNSLYFQAMFDNFKEQEYSEIKIRVQNSQIATDVIKSFYEKSNVINADWQYQLDYAIETKFFGVEYVLDKNIIVPYIYFDLFVDKIELIGYNNTTLNMILNNLPLDYDLDKFPTDFLEGLLVSSTEYDIFLSNKHCFYVWSVTDNKFTYSKEIPLELYYSYLDNDKIYKFTEHNSLICFNKKTDRHKSILLYDNDKIIKFDTEGVIYYLPENNQIILSHVERTTTGCDYKISLFCLETKQLIRTFHSRNYFGNEIILQISVSHDKIIVFGDDVQVKNFSSGVCLFTINQNESGVCIACDPEWSYFAIGSEDYDTEDQKITIYDLSNGNKVKTLNHRDSIRDILWTSKYIIAHNNENIYFYETNNYELVKKLDYKNNGLIKKIDCFDDSEFLYVLTNNSKMFQINMDSLENTDSNNISTEICFTQIGRFCDFKTIKNSNYHKSKLIKKTLEQRRRMDKN</sequence>
<accession>Q5UNY6</accession>
<reference key="1">
    <citation type="journal article" date="2004" name="Science">
        <title>The 1.2-megabase genome sequence of Mimivirus.</title>
        <authorList>
            <person name="Raoult D."/>
            <person name="Audic S."/>
            <person name="Robert C."/>
            <person name="Abergel C."/>
            <person name="Renesto P."/>
            <person name="Ogata H."/>
            <person name="La Scola B."/>
            <person name="Susan M."/>
            <person name="Claverie J.-M."/>
        </authorList>
    </citation>
    <scope>NUCLEOTIDE SEQUENCE [LARGE SCALE GENOMIC DNA]</scope>
    <source>
        <strain>Rowbotham-Bradford</strain>
    </source>
</reference>
<feature type="chain" id="PRO_0000186233" description="Putative BTB/POZ domain-containing protein R738">
    <location>
        <begin position="1"/>
        <end position="497"/>
    </location>
</feature>
<feature type="domain" description="BTB" evidence="1">
    <location>
        <begin position="16"/>
        <end position="86"/>
    </location>
</feature>
<keyword id="KW-1185">Reference proteome</keyword>
<proteinExistence type="inferred from homology"/>
<gene>
    <name type="ordered locus">MIMI_R738</name>
</gene>
<organism>
    <name type="scientific">Acanthamoeba polyphaga mimivirus</name>
    <name type="common">APMV</name>
    <dbReference type="NCBI Taxonomy" id="212035"/>
    <lineage>
        <taxon>Viruses</taxon>
        <taxon>Varidnaviria</taxon>
        <taxon>Bamfordvirae</taxon>
        <taxon>Nucleocytoviricota</taxon>
        <taxon>Megaviricetes</taxon>
        <taxon>Imitervirales</taxon>
        <taxon>Mimiviridae</taxon>
        <taxon>Megamimivirinae</taxon>
        <taxon>Mimivirus</taxon>
        <taxon>Mimivirus bradfordmassiliense</taxon>
    </lineage>
</organism>
<protein>
    <recommendedName>
        <fullName>Putative BTB/POZ domain-containing protein R738</fullName>
    </recommendedName>
</protein>